<sequence>MTSLTNTIGPDVPGPALTTAGGDVPDYFALLKPRVMVLVIFTALVGMVVSQGHVQPAIGAISLLAIAVGAGASGCLNMWWDADIDAVMSRTATRPIPSGRITSEEALGFGLFLSVASVVVLGLAANLLAAALLAFTIVFYAVVYSMWLKRATAQNIVIGGAAGALPPVIGQAVVTGSIGIESLILFAIIFIWTPPHFWALALIKADEYARAGIPMMPNVAGPASTRRQIVWYSLLLAPLGLVPVALGFGGLVYAVVGLVGGLGMVAFSIRVLRNPEGDAERRAAMGMFGFSILYLFALFSALLAEQSFGLFRPVLG</sequence>
<comment type="function">
    <text evidence="1">Converts heme B (protoheme IX) to heme O by substitution of the vinyl group on carbon 2 of heme B porphyrin ring with a hydroxyethyl farnesyl side group.</text>
</comment>
<comment type="catalytic activity">
    <reaction evidence="1">
        <text>heme b + (2E,6E)-farnesyl diphosphate + H2O = Fe(II)-heme o + diphosphate</text>
        <dbReference type="Rhea" id="RHEA:28070"/>
        <dbReference type="ChEBI" id="CHEBI:15377"/>
        <dbReference type="ChEBI" id="CHEBI:33019"/>
        <dbReference type="ChEBI" id="CHEBI:60344"/>
        <dbReference type="ChEBI" id="CHEBI:60530"/>
        <dbReference type="ChEBI" id="CHEBI:175763"/>
        <dbReference type="EC" id="2.5.1.141"/>
    </reaction>
</comment>
<comment type="pathway">
    <text evidence="1">Porphyrin-containing compound metabolism; heme O biosynthesis; heme O from protoheme: step 1/1.</text>
</comment>
<comment type="subcellular location">
    <subcellularLocation>
        <location evidence="1">Cell inner membrane</location>
        <topology evidence="1">Multi-pass membrane protein</topology>
    </subcellularLocation>
</comment>
<comment type="miscellaneous">
    <text evidence="1">Carbon 2 of the heme B porphyrin ring is defined according to the Fischer nomenclature.</text>
</comment>
<comment type="similarity">
    <text evidence="1">Belongs to the UbiA prenyltransferase family. Protoheme IX farnesyltransferase subfamily.</text>
</comment>
<proteinExistence type="inferred from homology"/>
<protein>
    <recommendedName>
        <fullName evidence="1">Protoheme IX farnesyltransferase</fullName>
        <ecNumber evidence="1">2.5.1.141</ecNumber>
    </recommendedName>
    <alternativeName>
        <fullName evidence="1">Heme B farnesyltransferase</fullName>
    </alternativeName>
    <alternativeName>
        <fullName evidence="1">Heme O synthase</fullName>
    </alternativeName>
</protein>
<reference key="1">
    <citation type="submission" date="2008-03" db="EMBL/GenBank/DDBJ databases">
        <title>Complete sequence of chromosome of Methylobacterium radiotolerans JCM 2831.</title>
        <authorList>
            <consortium name="US DOE Joint Genome Institute"/>
            <person name="Copeland A."/>
            <person name="Lucas S."/>
            <person name="Lapidus A."/>
            <person name="Glavina del Rio T."/>
            <person name="Dalin E."/>
            <person name="Tice H."/>
            <person name="Bruce D."/>
            <person name="Goodwin L."/>
            <person name="Pitluck S."/>
            <person name="Kiss H."/>
            <person name="Brettin T."/>
            <person name="Detter J.C."/>
            <person name="Han C."/>
            <person name="Kuske C.R."/>
            <person name="Schmutz J."/>
            <person name="Larimer F."/>
            <person name="Land M."/>
            <person name="Hauser L."/>
            <person name="Kyrpides N."/>
            <person name="Mikhailova N."/>
            <person name="Marx C.J."/>
            <person name="Richardson P."/>
        </authorList>
    </citation>
    <scope>NUCLEOTIDE SEQUENCE [LARGE SCALE GENOMIC DNA]</scope>
    <source>
        <strain>ATCC 27329 / DSM 1819 / JCM 2831 / NBRC 15690 / NCIMB 10815 / 0-1</strain>
    </source>
</reference>
<dbReference type="EC" id="2.5.1.141" evidence="1"/>
<dbReference type="EMBL" id="CP001001">
    <property type="protein sequence ID" value="ACB22058.1"/>
    <property type="molecule type" value="Genomic_DNA"/>
</dbReference>
<dbReference type="RefSeq" id="WP_012317059.1">
    <property type="nucleotide sequence ID" value="NC_010505.1"/>
</dbReference>
<dbReference type="SMR" id="B1M595"/>
<dbReference type="STRING" id="426355.Mrad2831_0031"/>
<dbReference type="GeneID" id="6136330"/>
<dbReference type="KEGG" id="mrd:Mrad2831_0031"/>
<dbReference type="eggNOG" id="COG0109">
    <property type="taxonomic scope" value="Bacteria"/>
</dbReference>
<dbReference type="HOGENOM" id="CLU_029631_0_2_5"/>
<dbReference type="OrthoDB" id="9814417at2"/>
<dbReference type="UniPathway" id="UPA00834">
    <property type="reaction ID" value="UER00712"/>
</dbReference>
<dbReference type="Proteomes" id="UP000006589">
    <property type="component" value="Chromosome"/>
</dbReference>
<dbReference type="GO" id="GO:0005886">
    <property type="term" value="C:plasma membrane"/>
    <property type="evidence" value="ECO:0007669"/>
    <property type="project" value="UniProtKB-SubCell"/>
</dbReference>
<dbReference type="GO" id="GO:0008495">
    <property type="term" value="F:protoheme IX farnesyltransferase activity"/>
    <property type="evidence" value="ECO:0007669"/>
    <property type="project" value="UniProtKB-UniRule"/>
</dbReference>
<dbReference type="GO" id="GO:0048034">
    <property type="term" value="P:heme O biosynthetic process"/>
    <property type="evidence" value="ECO:0007669"/>
    <property type="project" value="UniProtKB-UniRule"/>
</dbReference>
<dbReference type="CDD" id="cd13957">
    <property type="entry name" value="PT_UbiA_Cox10"/>
    <property type="match status" value="1"/>
</dbReference>
<dbReference type="Gene3D" id="1.10.357.140">
    <property type="entry name" value="UbiA prenyltransferase"/>
    <property type="match status" value="1"/>
</dbReference>
<dbReference type="HAMAP" id="MF_00154">
    <property type="entry name" value="CyoE_CtaB"/>
    <property type="match status" value="1"/>
</dbReference>
<dbReference type="InterPro" id="IPR006369">
    <property type="entry name" value="Protohaem_IX_farnesylTrfase"/>
</dbReference>
<dbReference type="InterPro" id="IPR000537">
    <property type="entry name" value="UbiA_prenyltransferase"/>
</dbReference>
<dbReference type="InterPro" id="IPR030470">
    <property type="entry name" value="UbiA_prenylTrfase_CS"/>
</dbReference>
<dbReference type="InterPro" id="IPR044878">
    <property type="entry name" value="UbiA_sf"/>
</dbReference>
<dbReference type="NCBIfam" id="TIGR01473">
    <property type="entry name" value="cyoE_ctaB"/>
    <property type="match status" value="1"/>
</dbReference>
<dbReference type="NCBIfam" id="NF003349">
    <property type="entry name" value="PRK04375.1-2"/>
    <property type="match status" value="1"/>
</dbReference>
<dbReference type="PANTHER" id="PTHR43448:SF7">
    <property type="entry name" value="4-HYDROXYBENZOATE SOLANESYLTRANSFERASE"/>
    <property type="match status" value="1"/>
</dbReference>
<dbReference type="PANTHER" id="PTHR43448">
    <property type="entry name" value="PROTOHEME IX FARNESYLTRANSFERASE, MITOCHONDRIAL"/>
    <property type="match status" value="1"/>
</dbReference>
<dbReference type="Pfam" id="PF01040">
    <property type="entry name" value="UbiA"/>
    <property type="match status" value="1"/>
</dbReference>
<dbReference type="PROSITE" id="PS00943">
    <property type="entry name" value="UBIA"/>
    <property type="match status" value="1"/>
</dbReference>
<accession>B1M595</accession>
<name>COXX_METRJ</name>
<keyword id="KW-0997">Cell inner membrane</keyword>
<keyword id="KW-1003">Cell membrane</keyword>
<keyword id="KW-0350">Heme biosynthesis</keyword>
<keyword id="KW-0472">Membrane</keyword>
<keyword id="KW-0808">Transferase</keyword>
<keyword id="KW-0812">Transmembrane</keyword>
<keyword id="KW-1133">Transmembrane helix</keyword>
<feature type="chain" id="PRO_0000346058" description="Protoheme IX farnesyltransferase">
    <location>
        <begin position="1"/>
        <end position="316"/>
    </location>
</feature>
<feature type="transmembrane region" description="Helical" evidence="1">
    <location>
        <begin position="35"/>
        <end position="55"/>
    </location>
</feature>
<feature type="transmembrane region" description="Helical" evidence="1">
    <location>
        <begin position="56"/>
        <end position="76"/>
    </location>
</feature>
<feature type="transmembrane region" description="Helical" evidence="1">
    <location>
        <begin position="119"/>
        <end position="139"/>
    </location>
</feature>
<feature type="transmembrane region" description="Helical" evidence="1">
    <location>
        <begin position="156"/>
        <end position="176"/>
    </location>
</feature>
<feature type="transmembrane region" description="Helical" evidence="1">
    <location>
        <begin position="183"/>
        <end position="203"/>
    </location>
</feature>
<feature type="transmembrane region" description="Helical" evidence="1">
    <location>
        <begin position="229"/>
        <end position="246"/>
    </location>
</feature>
<feature type="transmembrane region" description="Helical" evidence="1">
    <location>
        <begin position="250"/>
        <end position="272"/>
    </location>
</feature>
<feature type="transmembrane region" description="Helical" evidence="1">
    <location>
        <begin position="283"/>
        <end position="303"/>
    </location>
</feature>
<organism>
    <name type="scientific">Methylobacterium radiotolerans (strain ATCC 27329 / DSM 1819 / JCM 2831 / NBRC 15690 / NCIMB 10815 / 0-1)</name>
    <dbReference type="NCBI Taxonomy" id="426355"/>
    <lineage>
        <taxon>Bacteria</taxon>
        <taxon>Pseudomonadati</taxon>
        <taxon>Pseudomonadota</taxon>
        <taxon>Alphaproteobacteria</taxon>
        <taxon>Hyphomicrobiales</taxon>
        <taxon>Methylobacteriaceae</taxon>
        <taxon>Methylobacterium</taxon>
    </lineage>
</organism>
<evidence type="ECO:0000255" key="1">
    <source>
        <dbReference type="HAMAP-Rule" id="MF_00154"/>
    </source>
</evidence>
<gene>
    <name evidence="1" type="primary">ctaB</name>
    <name type="ordered locus">Mrad2831_0031</name>
</gene>